<name>IDH3A_HUMAN</name>
<keyword id="KW-0002">3D-structure</keyword>
<keyword id="KW-0007">Acetylation</keyword>
<keyword id="KW-0025">Alternative splicing</keyword>
<keyword id="KW-0903">Direct protein sequencing</keyword>
<keyword id="KW-0225">Disease variant</keyword>
<keyword id="KW-0460">Magnesium</keyword>
<keyword id="KW-0464">Manganese</keyword>
<keyword id="KW-0479">Metal-binding</keyword>
<keyword id="KW-0496">Mitochondrion</keyword>
<keyword id="KW-0520">NAD</keyword>
<keyword id="KW-0560">Oxidoreductase</keyword>
<keyword id="KW-0597">Phosphoprotein</keyword>
<keyword id="KW-1267">Proteomics identification</keyword>
<keyword id="KW-1185">Reference proteome</keyword>
<keyword id="KW-0682">Retinitis pigmentosa</keyword>
<keyword id="KW-0809">Transit peptide</keyword>
<keyword id="KW-0816">Tricarboxylic acid cycle</keyword>
<comment type="function">
    <text evidence="3">Catalytic subunit of the enzyme which catalyzes the decarboxylation of isocitrate (ICT) into alpha-ketoglutarate. The heterodimer composed of the alpha (IDH3A) and beta (IDH3B) subunits and the heterodimer composed of the alpha (IDH3A) and gamma (IDH3G) subunits, have considerable basal activity but the full activity of the heterotetramer (containing two subunits of IDH3A, one of IDH3B and one of IDH3G) requires the assembly and cooperative function of both heterodimers.</text>
</comment>
<comment type="catalytic activity">
    <reaction evidence="2 3">
        <text>D-threo-isocitrate + NAD(+) = 2-oxoglutarate + CO2 + NADH</text>
        <dbReference type="Rhea" id="RHEA:23632"/>
        <dbReference type="ChEBI" id="CHEBI:15562"/>
        <dbReference type="ChEBI" id="CHEBI:16526"/>
        <dbReference type="ChEBI" id="CHEBI:16810"/>
        <dbReference type="ChEBI" id="CHEBI:57540"/>
        <dbReference type="ChEBI" id="CHEBI:57945"/>
        <dbReference type="EC" id="1.1.1.41"/>
    </reaction>
    <physiologicalReaction direction="left-to-right" evidence="2 3">
        <dbReference type="Rhea" id="RHEA:23633"/>
    </physiologicalReaction>
</comment>
<comment type="cofactor">
    <cofactor evidence="2 3">
        <name>Mg(2+)</name>
        <dbReference type="ChEBI" id="CHEBI:18420"/>
    </cofactor>
    <cofactor evidence="3">
        <name>Mn(2+)</name>
        <dbReference type="ChEBI" id="CHEBI:29035"/>
    </cofactor>
    <text evidence="3">Divalent metal cations; Mn(2+) or Mg(2+). Activity higher in presence of Mn(2+) than of Mg(2+). Binds 1 Mg(2+) or Mn(2+) ion per subunit.</text>
</comment>
<comment type="activity regulation">
    <text evidence="2 3">The heterotetramer and the heterodimer composed of IDH3A and IDH3G subunits can be allosterically activated by citrate (CIT) or/and ADP, and the two activators can act independently or synergistically. The heterodimer composed of IDH3A and IDH3B subunits cannot be allosterically regulated and the allosteric regulation of the heterotetramer is through the IDH3G subunit and not the IDH3B subunit. The IDH3G subunit contains the allosteric site which consists of a CIT-binding site and an ADP-binding site, and the binding of CIT and ADP causes conformational changes at the allosteric site which are transmitted to the active site in the catalytic subunit (IDH3A) through a cascade of conformational changes at the heterodimer interface, leading to stabilization of the isocitrate-binding at the active site and thus activation of the enzyme. ATP can activate the heterotetramer and the heterodimer composed of IDH3A and IDH3G subunits at low concentrations but inhibits their activities at high concentrations, whereas ATP exhibits only inhibitory effect on the heterodimer composed of IDH3A and IDH3B subunits.</text>
</comment>
<comment type="biophysicochemical properties">
    <kinetics>
        <Vmax evidence="3">20.0 umol/min/mg enzyme with isocitrate as substrate (heterotetramer)</Vmax>
        <Vmax evidence="3">10.9 umol/min/mg enzyme with isocitrate as substrate (heterodimer composed of IDH3A and IDH3B subunits)</Vmax>
        <Vmax evidence="3">7.29 umol/min/mg enzyme with isocitrate as substrate (heterodimer composed of IDH3A and IDH3G subunits)</Vmax>
        <Vmax evidence="3">20.7 umol/min/mg enzyme with isocitrate as substrate in the presence of citrate (heterotetramer)</Vmax>
        <Vmax evidence="3">11.2 umol/min/mg enzyme with isocitrate as substrate in the presence of citrate (heterodimer composed of IDH3A and IDH3B subunits)</Vmax>
        <Vmax evidence="3">10.0 umol/min/mg enzyme with isocitrate as substrate in the presence of citrate (heterodimer composed of IDH3A and IDH3G subunits)</Vmax>
        <Vmax evidence="3">22.1 umol/min/mg enzyme with isocitrate as substrate in the presence of ADP (heterotetramer)</Vmax>
        <Vmax evidence="3">11.2 umol/min/mg enzyme with isocitrate as substrate in the presence of ADP (heterodimer composed of IDH3A and IDH3B subunits)</Vmax>
        <Vmax evidence="3">9.42 umol/min/mg enzyme with isocitrate as substrate in the presence of ADP (heterodimer composed of IDH3A and IDH3G subunits)</Vmax>
        <Vmax evidence="3">21.3 umol/min/mg enzyme with isocitrate as substrate in the presence of citrate and ADP (heterotetramer)</Vmax>
        <Vmax evidence="3">11.9 umol/min/mg enzyme with isocitrate as substrate in the presence of citrate and ADP (heterodimer composed of IDH3A and IDH3B subunits)</Vmax>
        <Vmax evidence="3">13.1 umol/min/mg enzyme with isocitrate as substrate in the presence of citrate and ADP (heterodimer composed of IDH3A and IDH3G subunits)</Vmax>
        <Vmax evidence="3">17.7 umol/min/mg enzyme with isocitrate as substrate in the presence of ATP (heterotetramer)</Vmax>
        <Vmax evidence="3">6.62 umol/min/mg enzyme with isocitrate as substrate in the presence ATP (heterodimer composed of IDH3A and IDH3G subunits)</Vmax>
        <Vmax evidence="3">17.6 umol/min/mg enzyme with isocitrate as substrate in the presence of citrate and ATP (heterotetramer)</Vmax>
        <Vmax evidence="3">8.94 umol/min/mg enzyme with isocitrate as substrate in the presence of citrate and ATP (heterodimer composed of IDH3A and IDH3G subunits)</Vmax>
        <text evidence="3">kcat is 26.7 sec(-1) for the heterotetramer with isocitrate as substrate. kcat is 14.6 sec(-1) for the heterodimer composed of IDH3A and IDH3B subunits with isocitrate as substrate. kcat is 9.72 sec(-1) for the heterodimer composed of IDH3A and IDH3G subunits with isocitrate as substrate. kcat is 23.4 sec(-1) for the heterotetramer with isocitrate as substrate in the presence of citrate and ATP. kcat is 11.9 sec(-1) for the heterodimer composed of IDH3A and IDH3G subunits with isocitrate as substrate in the presence of citrate and ATP. kcat is 28.4 sec(-1) for the heterotetramer with isocitrate as substrate in the presence of citrate and ADP. kcat is 15.8 sec(-1) for the heterodimer composed of IDH3A and IDH3B subunits with isocitrate as substrate in the presence of citrate and ADP. kcat is 17.6 sec(-1) for the heterodimer composed of IDH3A and IDH3G subunits with isocitrate as substrate in the presence of citrate and ADP.</text>
    </kinetics>
</comment>
<comment type="subunit">
    <text evidence="2 3">Heterooligomer of subunits alpha (IDH3A), beta (IDH3B), and gamma (IDH3G) in the apparent ratio of 2:1:1. The heterodimer containing one IDH3A and one IDH3B subunit and the heterodimer containing one IDH3A and one IDH3G subunit assemble into a heterotetramer (which contains two subunits of IDH3A, one of IDH3B and one of IDH3G) and further into the heterooctamer.</text>
</comment>
<comment type="interaction">
    <interactant intactId="EBI-355999">
        <id>P50213</id>
    </interactant>
    <interactant intactId="EBI-1210876">
        <id>P51553</id>
        <label>IDH3G</label>
    </interactant>
    <organismsDiffer>false</organismsDiffer>
    <experiments>6</experiments>
</comment>
<comment type="interaction">
    <interactant intactId="EBI-355999">
        <id>P50213</id>
    </interactant>
    <interactant intactId="EBI-715117">
        <id>P34896</id>
        <label>SHMT1</label>
    </interactant>
    <organismsDiffer>false</organismsDiffer>
    <experiments>6</experiments>
</comment>
<comment type="interaction">
    <interactant intactId="EBI-25820746">
        <id>PRO_0000014436</id>
    </interactant>
    <interactant intactId="EBI-725399">
        <id>O43837-2</id>
        <label>IDH3B</label>
    </interactant>
    <organismsDiffer>false</organismsDiffer>
    <experiments>2</experiments>
</comment>
<comment type="subcellular location">
    <subcellularLocation>
        <location>Mitochondrion</location>
    </subcellularLocation>
</comment>
<comment type="alternative products">
    <event type="alternative splicing"/>
    <isoform>
        <id>P50213-1</id>
        <name>1</name>
        <sequence type="displayed"/>
    </isoform>
    <isoform>
        <id>P50213-2</id>
        <name>2</name>
        <sequence type="described" ref="VSP_014516"/>
    </isoform>
</comment>
<comment type="disease" evidence="4 5 6">
    <disease id="DI-05910">
        <name>Retinitis pigmentosa 90</name>
        <acronym>RP90</acronym>
        <description>A form of retinitis pigmentosa, a retinal dystrophy belonging to the group of pigmentary retinopathies. Retinitis pigmentosa is characterized by retinal pigment deposits visible on fundus examination and primary loss of rod photoreceptor cells followed by secondary loss of cone photoreceptors. Patients typically have night vision blindness and loss of midperipheral visual field. RP90 is an autosomal recessive form.</description>
        <dbReference type="MIM" id="619007"/>
    </disease>
    <text>The disease is caused by variants affecting the gene represented in this entry.</text>
</comment>
<comment type="similarity">
    <text evidence="8">Belongs to the isocitrate and isopropylmalate dehydrogenases family.</text>
</comment>
<organism>
    <name type="scientific">Homo sapiens</name>
    <name type="common">Human</name>
    <dbReference type="NCBI Taxonomy" id="9606"/>
    <lineage>
        <taxon>Eukaryota</taxon>
        <taxon>Metazoa</taxon>
        <taxon>Chordata</taxon>
        <taxon>Craniata</taxon>
        <taxon>Vertebrata</taxon>
        <taxon>Euteleostomi</taxon>
        <taxon>Mammalia</taxon>
        <taxon>Eutheria</taxon>
        <taxon>Euarchontoglires</taxon>
        <taxon>Primates</taxon>
        <taxon>Haplorrhini</taxon>
        <taxon>Catarrhini</taxon>
        <taxon>Hominidae</taxon>
        <taxon>Homo</taxon>
    </lineage>
</organism>
<gene>
    <name evidence="10" type="primary">IDH3A</name>
</gene>
<dbReference type="EC" id="1.1.1.41" evidence="2 3"/>
<dbReference type="EMBL" id="U07681">
    <property type="protein sequence ID" value="AAA85639.1"/>
    <property type="molecule type" value="mRNA"/>
</dbReference>
<dbReference type="EMBL" id="AL442090">
    <property type="protein sequence ID" value="CAC09449.1"/>
    <property type="molecule type" value="mRNA"/>
</dbReference>
<dbReference type="EMBL" id="CH471136">
    <property type="protein sequence ID" value="EAW99181.1"/>
    <property type="molecule type" value="Genomic_DNA"/>
</dbReference>
<dbReference type="EMBL" id="CH471136">
    <property type="protein sequence ID" value="EAW99182.1"/>
    <property type="molecule type" value="Genomic_DNA"/>
</dbReference>
<dbReference type="EMBL" id="BC021967">
    <property type="protein sequence ID" value="AAH21967.1"/>
    <property type="molecule type" value="mRNA"/>
</dbReference>
<dbReference type="CCDS" id="CCDS10297.1">
    <molecule id="P50213-1"/>
</dbReference>
<dbReference type="PIR" id="S55282">
    <property type="entry name" value="S55282"/>
</dbReference>
<dbReference type="RefSeq" id="NP_005521.1">
    <molecule id="P50213-1"/>
    <property type="nucleotide sequence ID" value="NM_005530.3"/>
</dbReference>
<dbReference type="PDB" id="5GRE">
    <property type="method" value="X-ray"/>
    <property type="resolution" value="2.65 A"/>
    <property type="chains" value="A=28-366"/>
</dbReference>
<dbReference type="PDB" id="5GRF">
    <property type="method" value="X-ray"/>
    <property type="resolution" value="2.50 A"/>
    <property type="chains" value="A=28-366"/>
</dbReference>
<dbReference type="PDB" id="5GRH">
    <property type="method" value="X-ray"/>
    <property type="resolution" value="2.80 A"/>
    <property type="chains" value="A=28-366"/>
</dbReference>
<dbReference type="PDB" id="5GRI">
    <property type="method" value="X-ray"/>
    <property type="resolution" value="2.31 A"/>
    <property type="chains" value="A=28-366"/>
</dbReference>
<dbReference type="PDB" id="5GRL">
    <property type="method" value="X-ray"/>
    <property type="resolution" value="2.79 A"/>
    <property type="chains" value="A=28-366"/>
</dbReference>
<dbReference type="PDB" id="5YVT">
    <property type="method" value="X-ray"/>
    <property type="resolution" value="2.40 A"/>
    <property type="chains" value="A=28-366"/>
</dbReference>
<dbReference type="PDB" id="6KDE">
    <property type="method" value="X-ray"/>
    <property type="resolution" value="3.00 A"/>
    <property type="chains" value="A/C=28-366"/>
</dbReference>
<dbReference type="PDB" id="6KDF">
    <property type="method" value="X-ray"/>
    <property type="resolution" value="3.05 A"/>
    <property type="chains" value="A/B/E/G/I/K/M/O=28-366"/>
</dbReference>
<dbReference type="PDB" id="6KDY">
    <property type="method" value="X-ray"/>
    <property type="resolution" value="3.02 A"/>
    <property type="chains" value="A/C/E/G=28-366"/>
</dbReference>
<dbReference type="PDB" id="6KE3">
    <property type="method" value="X-ray"/>
    <property type="resolution" value="3.31 A"/>
    <property type="chains" value="A/C/E/G=28-366"/>
</dbReference>
<dbReference type="PDB" id="6L57">
    <property type="method" value="X-ray"/>
    <property type="resolution" value="2.30 A"/>
    <property type="chains" value="A=28-366"/>
</dbReference>
<dbReference type="PDB" id="6L59">
    <property type="method" value="X-ray"/>
    <property type="resolution" value="2.25 A"/>
    <property type="chains" value="A=28-366"/>
</dbReference>
<dbReference type="PDB" id="7CE3">
    <property type="method" value="X-ray"/>
    <property type="resolution" value="3.47 A"/>
    <property type="chains" value="A/C=1-366"/>
</dbReference>
<dbReference type="PDB" id="8GRB">
    <property type="method" value="X-ray"/>
    <property type="resolution" value="2.85 A"/>
    <property type="chains" value="A/B/E/G/I/K/M/O=28-366"/>
</dbReference>
<dbReference type="PDB" id="8GRD">
    <property type="method" value="X-ray"/>
    <property type="resolution" value="2.70 A"/>
    <property type="chains" value="A=28-366"/>
</dbReference>
<dbReference type="PDB" id="8GRG">
    <property type="method" value="X-ray"/>
    <property type="resolution" value="2.70 A"/>
    <property type="chains" value="A=28-366"/>
</dbReference>
<dbReference type="PDB" id="8GRH">
    <property type="method" value="X-ray"/>
    <property type="resolution" value="2.51 A"/>
    <property type="chains" value="A=28-366"/>
</dbReference>
<dbReference type="PDB" id="8GRU">
    <property type="method" value="X-ray"/>
    <property type="resolution" value="2.85 A"/>
    <property type="chains" value="A/C=28-366"/>
</dbReference>
<dbReference type="PDB" id="8GS5">
    <property type="method" value="X-ray"/>
    <property type="resolution" value="4.49 A"/>
    <property type="chains" value="A/C/E/G/I/K/M/O=28-366"/>
</dbReference>
<dbReference type="PDBsum" id="5GRE"/>
<dbReference type="PDBsum" id="5GRF"/>
<dbReference type="PDBsum" id="5GRH"/>
<dbReference type="PDBsum" id="5GRI"/>
<dbReference type="PDBsum" id="5GRL"/>
<dbReference type="PDBsum" id="5YVT"/>
<dbReference type="PDBsum" id="6KDE"/>
<dbReference type="PDBsum" id="6KDF"/>
<dbReference type="PDBsum" id="6KDY"/>
<dbReference type="PDBsum" id="6KE3"/>
<dbReference type="PDBsum" id="6L57"/>
<dbReference type="PDBsum" id="6L59"/>
<dbReference type="PDBsum" id="7CE3"/>
<dbReference type="PDBsum" id="8GRB"/>
<dbReference type="PDBsum" id="8GRD"/>
<dbReference type="PDBsum" id="8GRG"/>
<dbReference type="PDBsum" id="8GRH"/>
<dbReference type="PDBsum" id="8GRU"/>
<dbReference type="PDBsum" id="8GS5"/>
<dbReference type="SMR" id="P50213"/>
<dbReference type="BioGRID" id="109645">
    <property type="interactions" value="116"/>
</dbReference>
<dbReference type="ComplexPortal" id="CPX-553">
    <property type="entry name" value="Mitochondrial isocitrate dehydrogenase complex (NAD+)"/>
</dbReference>
<dbReference type="CORUM" id="P50213"/>
<dbReference type="FunCoup" id="P50213">
    <property type="interactions" value="1892"/>
</dbReference>
<dbReference type="IntAct" id="P50213">
    <property type="interactions" value="31"/>
</dbReference>
<dbReference type="MINT" id="P50213"/>
<dbReference type="STRING" id="9606.ENSP00000299518"/>
<dbReference type="ChEMBL" id="CHEMBL4296004"/>
<dbReference type="DrugBank" id="DB09130">
    <property type="generic name" value="Copper"/>
</dbReference>
<dbReference type="DrugBank" id="DB13874">
    <property type="generic name" value="Enasidenib"/>
</dbReference>
<dbReference type="DrugBank" id="DB06757">
    <property type="generic name" value="Manganese cation"/>
</dbReference>
<dbReference type="DrugBank" id="DB00157">
    <property type="generic name" value="NADH"/>
</dbReference>
<dbReference type="DrugBank" id="DB17097">
    <property type="generic name" value="Vorasidenib"/>
</dbReference>
<dbReference type="DrugBank" id="DB09092">
    <property type="generic name" value="Xanthinol"/>
</dbReference>
<dbReference type="CarbonylDB" id="P50213"/>
<dbReference type="GlyCosmos" id="P50213">
    <property type="glycosylation" value="1 site, 1 glycan"/>
</dbReference>
<dbReference type="GlyGen" id="P50213">
    <property type="glycosylation" value="2 sites, 1 O-linked glycan (1 site)"/>
</dbReference>
<dbReference type="iPTMnet" id="P50213"/>
<dbReference type="MetOSite" id="P50213"/>
<dbReference type="PhosphoSitePlus" id="P50213"/>
<dbReference type="SwissPalm" id="P50213"/>
<dbReference type="BioMuta" id="IDH3A"/>
<dbReference type="DMDM" id="1708399"/>
<dbReference type="OGP" id="P50213"/>
<dbReference type="REPRODUCTION-2DPAGE" id="IPI00030702"/>
<dbReference type="CPTAC" id="CPTAC-2739"/>
<dbReference type="jPOST" id="P50213"/>
<dbReference type="MassIVE" id="P50213"/>
<dbReference type="PaxDb" id="9606-ENSP00000299518"/>
<dbReference type="PeptideAtlas" id="P50213"/>
<dbReference type="ProteomicsDB" id="56201">
    <molecule id="P50213-1"/>
</dbReference>
<dbReference type="ProteomicsDB" id="56202">
    <molecule id="P50213-2"/>
</dbReference>
<dbReference type="Pumba" id="P50213"/>
<dbReference type="Antibodypedia" id="14994">
    <property type="antibodies" value="294 antibodies from 33 providers"/>
</dbReference>
<dbReference type="DNASU" id="3419"/>
<dbReference type="Ensembl" id="ENST00000299518.7">
    <molecule id="P50213-1"/>
    <property type="protein sequence ID" value="ENSP00000299518.2"/>
    <property type="gene ID" value="ENSG00000166411.14"/>
</dbReference>
<dbReference type="GeneID" id="3419"/>
<dbReference type="KEGG" id="hsa:3419"/>
<dbReference type="MANE-Select" id="ENST00000299518.7">
    <property type="protein sequence ID" value="ENSP00000299518.2"/>
    <property type="RefSeq nucleotide sequence ID" value="NM_005530.3"/>
    <property type="RefSeq protein sequence ID" value="NP_005521.1"/>
</dbReference>
<dbReference type="UCSC" id="uc002bdd.4">
    <molecule id="P50213-1"/>
    <property type="organism name" value="human"/>
</dbReference>
<dbReference type="AGR" id="HGNC:5384"/>
<dbReference type="CTD" id="3419"/>
<dbReference type="DisGeNET" id="3419"/>
<dbReference type="GeneCards" id="IDH3A"/>
<dbReference type="HGNC" id="HGNC:5384">
    <property type="gene designation" value="IDH3A"/>
</dbReference>
<dbReference type="HPA" id="ENSG00000166411">
    <property type="expression patterns" value="Tissue enhanced (tongue)"/>
</dbReference>
<dbReference type="MalaCards" id="IDH3A"/>
<dbReference type="MIM" id="601149">
    <property type="type" value="gene"/>
</dbReference>
<dbReference type="MIM" id="619007">
    <property type="type" value="phenotype"/>
</dbReference>
<dbReference type="neXtProt" id="NX_P50213"/>
<dbReference type="OpenTargets" id="ENSG00000166411"/>
<dbReference type="Orphanet" id="791">
    <property type="disease" value="Retinitis pigmentosa"/>
</dbReference>
<dbReference type="PharmGKB" id="PA29632"/>
<dbReference type="VEuPathDB" id="HostDB:ENSG00000166411"/>
<dbReference type="eggNOG" id="KOG0785">
    <property type="taxonomic scope" value="Eukaryota"/>
</dbReference>
<dbReference type="GeneTree" id="ENSGT00950000182989"/>
<dbReference type="HOGENOM" id="CLU_031953_0_1_1"/>
<dbReference type="InParanoid" id="P50213"/>
<dbReference type="OMA" id="VRPCRYY"/>
<dbReference type="OrthoDB" id="10261637at2759"/>
<dbReference type="PAN-GO" id="P50213">
    <property type="GO annotations" value="4 GO annotations based on evolutionary models"/>
</dbReference>
<dbReference type="PhylomeDB" id="P50213"/>
<dbReference type="TreeFam" id="TF105692"/>
<dbReference type="BioCyc" id="MetaCyc:ENSG00000166411-MONOMER"/>
<dbReference type="BRENDA" id="1.1.1.41">
    <property type="organism ID" value="2681"/>
</dbReference>
<dbReference type="PathwayCommons" id="P50213"/>
<dbReference type="Reactome" id="R-HSA-71403">
    <property type="pathway name" value="Citric acid cycle (TCA cycle)"/>
</dbReference>
<dbReference type="Reactome" id="R-HSA-9837999">
    <property type="pathway name" value="Mitochondrial protein degradation"/>
</dbReference>
<dbReference type="SABIO-RK" id="P50213"/>
<dbReference type="SignaLink" id="P50213"/>
<dbReference type="SIGNOR" id="P50213"/>
<dbReference type="BioGRID-ORCS" id="3419">
    <property type="hits" value="294 hits in 1166 CRISPR screens"/>
</dbReference>
<dbReference type="CD-CODE" id="91857CE7">
    <property type="entry name" value="Nucleolus"/>
</dbReference>
<dbReference type="CD-CODE" id="FB4E32DD">
    <property type="entry name" value="Presynaptic clusters and postsynaptic densities"/>
</dbReference>
<dbReference type="ChiTaRS" id="IDH3A">
    <property type="organism name" value="human"/>
</dbReference>
<dbReference type="GeneWiki" id="IDH3A"/>
<dbReference type="GenomeRNAi" id="3419"/>
<dbReference type="Pharos" id="P50213">
    <property type="development level" value="Tbio"/>
</dbReference>
<dbReference type="PRO" id="PR:P50213"/>
<dbReference type="Proteomes" id="UP000005640">
    <property type="component" value="Chromosome 15"/>
</dbReference>
<dbReference type="RNAct" id="P50213">
    <property type="molecule type" value="protein"/>
</dbReference>
<dbReference type="Bgee" id="ENSG00000166411">
    <property type="expression patterns" value="Expressed in right atrium auricular region and 208 other cell types or tissues"/>
</dbReference>
<dbReference type="ExpressionAtlas" id="P50213">
    <property type="expression patterns" value="baseline and differential"/>
</dbReference>
<dbReference type="GO" id="GO:0045242">
    <property type="term" value="C:isocitrate dehydrogenase complex (NAD+)"/>
    <property type="evidence" value="ECO:0000314"/>
    <property type="project" value="FlyBase"/>
</dbReference>
<dbReference type="GO" id="GO:0005759">
    <property type="term" value="C:mitochondrial matrix"/>
    <property type="evidence" value="ECO:0000304"/>
    <property type="project" value="Reactome"/>
</dbReference>
<dbReference type="GO" id="GO:0005739">
    <property type="term" value="C:mitochondrion"/>
    <property type="evidence" value="ECO:0000314"/>
    <property type="project" value="HPA"/>
</dbReference>
<dbReference type="GO" id="GO:0005634">
    <property type="term" value="C:nucleus"/>
    <property type="evidence" value="ECO:0007005"/>
    <property type="project" value="UniProtKB"/>
</dbReference>
<dbReference type="GO" id="GO:0004449">
    <property type="term" value="F:isocitrate dehydrogenase (NAD+) activity"/>
    <property type="evidence" value="ECO:0000314"/>
    <property type="project" value="UniProtKB"/>
</dbReference>
<dbReference type="GO" id="GO:0000287">
    <property type="term" value="F:magnesium ion binding"/>
    <property type="evidence" value="ECO:0000314"/>
    <property type="project" value="UniProtKB"/>
</dbReference>
<dbReference type="GO" id="GO:0051287">
    <property type="term" value="F:NAD binding"/>
    <property type="evidence" value="ECO:0007669"/>
    <property type="project" value="InterPro"/>
</dbReference>
<dbReference type="GO" id="GO:0005975">
    <property type="term" value="P:carbohydrate metabolic process"/>
    <property type="evidence" value="ECO:0000303"/>
    <property type="project" value="ProtInc"/>
</dbReference>
<dbReference type="GO" id="GO:0006102">
    <property type="term" value="P:isocitrate metabolic process"/>
    <property type="evidence" value="ECO:0000318"/>
    <property type="project" value="GO_Central"/>
</dbReference>
<dbReference type="GO" id="GO:0006099">
    <property type="term" value="P:tricarboxylic acid cycle"/>
    <property type="evidence" value="ECO:0000314"/>
    <property type="project" value="ComplexPortal"/>
</dbReference>
<dbReference type="FunFam" id="3.40.718.10:FF:000003">
    <property type="entry name" value="Isocitrate dehydrogenase [NAD] subunit, mitochondrial"/>
    <property type="match status" value="1"/>
</dbReference>
<dbReference type="Gene3D" id="3.40.718.10">
    <property type="entry name" value="Isopropylmalate Dehydrogenase"/>
    <property type="match status" value="1"/>
</dbReference>
<dbReference type="InterPro" id="IPR019818">
    <property type="entry name" value="IsoCit/isopropylmalate_DH_CS"/>
</dbReference>
<dbReference type="InterPro" id="IPR004434">
    <property type="entry name" value="Isocitrate_DH_NAD"/>
</dbReference>
<dbReference type="InterPro" id="IPR024084">
    <property type="entry name" value="IsoPropMal-DH-like_dom"/>
</dbReference>
<dbReference type="NCBIfam" id="TIGR00175">
    <property type="entry name" value="mito_nad_idh"/>
    <property type="match status" value="1"/>
</dbReference>
<dbReference type="PANTHER" id="PTHR11835">
    <property type="entry name" value="DECARBOXYLATING DEHYDROGENASES-ISOCITRATE, ISOPROPYLMALATE, TARTRATE"/>
    <property type="match status" value="1"/>
</dbReference>
<dbReference type="PANTHER" id="PTHR11835:SF34">
    <property type="entry name" value="ISOCITRATE DEHYDROGENASE [NAD] SUBUNIT ALPHA, MITOCHONDRIAL"/>
    <property type="match status" value="1"/>
</dbReference>
<dbReference type="Pfam" id="PF00180">
    <property type="entry name" value="Iso_dh"/>
    <property type="match status" value="1"/>
</dbReference>
<dbReference type="SMART" id="SM01329">
    <property type="entry name" value="Iso_dh"/>
    <property type="match status" value="1"/>
</dbReference>
<dbReference type="SUPFAM" id="SSF53659">
    <property type="entry name" value="Isocitrate/Isopropylmalate dehydrogenase-like"/>
    <property type="match status" value="1"/>
</dbReference>
<dbReference type="PROSITE" id="PS00470">
    <property type="entry name" value="IDH_IMDH"/>
    <property type="match status" value="1"/>
</dbReference>
<sequence length="366" mass="39592">MAGPAWISKVSRLLGAFHNPKQVTRGFTGGVQTVTLIPGDGIGPEISAAVMKIFDAAKAPIQWEERNVTAIQGPGGKWMIPSEAKESMDKNKMGLKGPLKTPIAAGHPSMNLLLRKTFDLYANVRPCVSIEGYKTPYTDVNIVTIRENTEGEYSGIEHVIVDGVVQSIKLITEGASKRIAEFAFEYARNNHRSNVTAVHKANIMRMSDGLFLQKCREVAESCKDIKFNEMYLDTVCLNMVQDPSQFDVLVMPNLYGDILSDLCAGLIGGLGVTPSGNIGANGVAIFESVHGTAPDIAGKDMANPTALLLSAVMMLRHMGLFDHAARIEAACFATIKDGKSLTKDLGGNAKCSDFTEEICRRVKDLD</sequence>
<accession>P50213</accession>
<accession>D3DW83</accession>
<accession>Q9H3X0</accession>
<feature type="transit peptide" description="Mitochondrion" evidence="12">
    <location>
        <begin position="1"/>
        <end position="27"/>
    </location>
</feature>
<feature type="chain" id="PRO_0000014436" description="Isocitrate dehydrogenase [NAD] subunit alpha, mitochondrial">
    <location>
        <begin position="28"/>
        <end position="366"/>
    </location>
</feature>
<feature type="binding site" evidence="2">
    <location>
        <position position="115"/>
    </location>
    <ligand>
        <name>substrate</name>
    </ligand>
</feature>
<feature type="binding site" evidence="2">
    <location>
        <position position="125"/>
    </location>
    <ligand>
        <name>substrate</name>
    </ligand>
</feature>
<feature type="binding site" evidence="2">
    <location>
        <position position="146"/>
    </location>
    <ligand>
        <name>substrate</name>
    </ligand>
</feature>
<feature type="binding site" evidence="2">
    <location>
        <position position="233"/>
    </location>
    <ligand>
        <name>Mg(2+)</name>
        <dbReference type="ChEBI" id="CHEBI:18420"/>
    </ligand>
</feature>
<feature type="binding site" evidence="2">
    <location>
        <position position="257"/>
    </location>
    <ligand>
        <name>Mg(2+)</name>
        <dbReference type="ChEBI" id="CHEBI:18420"/>
    </ligand>
</feature>
<feature type="binding site" evidence="2">
    <location>
        <position position="261"/>
    </location>
    <ligand>
        <name>Mg(2+)</name>
        <dbReference type="ChEBI" id="CHEBI:18420"/>
    </ligand>
</feature>
<feature type="site" description="Critical for catalysis" evidence="2 3">
    <location>
        <position position="153"/>
    </location>
</feature>
<feature type="site" description="Critical for catalysis" evidence="2">
    <location>
        <position position="200"/>
    </location>
</feature>
<feature type="modified residue" description="N6-succinyllysine" evidence="1">
    <location>
        <position position="77"/>
    </location>
</feature>
<feature type="modified residue" description="Phosphothreonine" evidence="1">
    <location>
        <position position="101"/>
    </location>
</feature>
<feature type="modified residue" description="N6-acetyllysine" evidence="1">
    <location>
        <position position="223"/>
    </location>
</feature>
<feature type="modified residue" description="N6-acetyllysine; alternate" evidence="11">
    <location>
        <position position="343"/>
    </location>
</feature>
<feature type="modified residue" description="N6-succinyllysine; alternate" evidence="1">
    <location>
        <position position="343"/>
    </location>
</feature>
<feature type="modified residue" description="N6-succinyllysine" evidence="1">
    <location>
        <position position="350"/>
    </location>
</feature>
<feature type="splice variant" id="VSP_014516" description="In isoform 2." evidence="7">
    <location>
        <begin position="1"/>
        <end position="78"/>
    </location>
</feature>
<feature type="sequence variant" id="VAR_084723" description="In RP90; uncertain significance; dbSNP:rs756333430." evidence="6">
    <original>A</original>
    <variation>T</variation>
    <location>
        <position position="122"/>
    </location>
</feature>
<feature type="sequence variant" id="VAR_084724" description="In RP90." evidence="4">
    <location>
        <begin position="155"/>
        <end position="366"/>
    </location>
</feature>
<feature type="sequence variant" id="VAR_084725" description="In RP90; uncertain significance; dbSNP:rs765473830." evidence="4">
    <original>A</original>
    <variation>V</variation>
    <location>
        <position position="175"/>
    </location>
</feature>
<feature type="sequence variant" id="VAR_084726" description="In RP90; uncertain significance; dbSNP:rs2074705330." evidence="5">
    <original>M</original>
    <variation>I</variation>
    <location>
        <position position="204"/>
    </location>
</feature>
<feature type="sequence variant" id="VAR_084727" description="In RP90; uncertain significance; dbSNP:rs2074707744." evidence="4">
    <original>M</original>
    <variation>T</variation>
    <location>
        <position position="239"/>
    </location>
</feature>
<feature type="sequence variant" id="VAR_084728" description="In RP90; uncertain significance; dbSNP:rs756712426." evidence="4">
    <original>P</original>
    <variation>H</variation>
    <location>
        <position position="304"/>
    </location>
</feature>
<feature type="sequence variant" id="VAR_084729" description="In RP90; uncertain significance; dbSNP:rs149862950." evidence="4">
    <original>M</original>
    <variation>T</variation>
    <location>
        <position position="313"/>
    </location>
</feature>
<feature type="sequence variant" id="VAR_084730" description="In RP90; uncertain significance; dbSNP:rs770798851." evidence="4">
    <original>R</original>
    <variation>C</variation>
    <location>
        <position position="316"/>
    </location>
</feature>
<feature type="mutagenesis site" description="No significant effect on the activation of the heterodimer composed of IDH3A and IDH3G subunits by citrate and ADP." evidence="2">
    <original>E</original>
    <variation>A</variation>
    <location>
        <position position="152"/>
    </location>
</feature>
<feature type="mutagenesis site" description="Complete loss of activity of the heterotetramer, heterodimer composed of IDH3A and IDH3B subunits and the heterodimer composed of IDH3A and IDH3G subunits with no effect on their oligomeric states." evidence="3">
    <original>Y</original>
    <variation>F</variation>
    <location>
        <position position="153"/>
    </location>
</feature>
<feature type="mutagenesis site" description="Significantly impairs the activation of the heterodimer composed of IDH3A and IDH3G subunits by citrate and ADP." evidence="2">
    <original>K</original>
    <variation>A</variation>
    <location>
        <position position="169"/>
    </location>
</feature>
<feature type="mutagenesis site" description="Significantly impairs the activation of the heterodimer composed of IDH3A and IDH3G subunits by citrate." evidence="2">
    <original>K</original>
    <variation>A</variation>
    <location>
        <position position="200"/>
    </location>
</feature>
<feature type="mutagenesis site" description="Significantly impairs the activation of the heterodimer composed of IDH3A and IDH3G subunits by citrate." evidence="2">
    <original>N</original>
    <variation>A</variation>
    <location>
        <position position="202"/>
    </location>
</feature>
<feature type="mutagenesis site" description="Complete loss of the activation of the heterodimer composed of IDH3A and IDH3G subunits by citrate and ADP." evidence="2">
    <original>D</original>
    <variation>A</variation>
    <location>
        <position position="208"/>
    </location>
</feature>
<feature type="mutagenesis site" description="Significantly impairs the activation of the heterodimer composed of IDH3A and IDH3G subunits by citrate and ADP." evidence="2">
    <original>Y</original>
    <variation>A</variation>
    <location>
        <position position="255"/>
    </location>
</feature>
<feature type="strand" evidence="17">
    <location>
        <begin position="33"/>
        <end position="37"/>
    </location>
</feature>
<feature type="strand" evidence="15">
    <location>
        <begin position="40"/>
        <end position="42"/>
    </location>
</feature>
<feature type="helix" evidence="17">
    <location>
        <begin position="43"/>
        <end position="56"/>
    </location>
</feature>
<feature type="strand" evidence="17">
    <location>
        <begin position="62"/>
        <end position="65"/>
    </location>
</feature>
<feature type="helix" evidence="17">
    <location>
        <begin position="82"/>
        <end position="91"/>
    </location>
</feature>
<feature type="strand" evidence="17">
    <location>
        <begin position="93"/>
        <end position="96"/>
    </location>
</feature>
<feature type="strand" evidence="19">
    <location>
        <begin position="103"/>
        <end position="107"/>
    </location>
</feature>
<feature type="helix" evidence="17">
    <location>
        <begin position="110"/>
        <end position="118"/>
    </location>
</feature>
<feature type="strand" evidence="17">
    <location>
        <begin position="122"/>
        <end position="128"/>
    </location>
</feature>
<feature type="strand" evidence="14">
    <location>
        <begin position="131"/>
        <end position="133"/>
    </location>
</feature>
<feature type="strand" evidence="17">
    <location>
        <begin position="141"/>
        <end position="147"/>
    </location>
</feature>
<feature type="strand" evidence="17">
    <location>
        <begin position="149"/>
        <end position="151"/>
    </location>
</feature>
<feature type="helix" evidence="18">
    <location>
        <begin position="152"/>
        <end position="154"/>
    </location>
</feature>
<feature type="strand" evidence="17">
    <location>
        <begin position="157"/>
        <end position="161"/>
    </location>
</feature>
<feature type="strand" evidence="17">
    <location>
        <begin position="164"/>
        <end position="172"/>
    </location>
</feature>
<feature type="helix" evidence="17">
    <location>
        <begin position="173"/>
        <end position="189"/>
    </location>
</feature>
<feature type="strand" evidence="17">
    <location>
        <begin position="194"/>
        <end position="199"/>
    </location>
</feature>
<feature type="turn" evidence="17">
    <location>
        <begin position="201"/>
        <end position="203"/>
    </location>
</feature>
<feature type="helix" evidence="17">
    <location>
        <begin position="205"/>
        <end position="220"/>
    </location>
</feature>
<feature type="strand" evidence="17">
    <location>
        <begin position="225"/>
        <end position="231"/>
    </location>
</feature>
<feature type="helix" evidence="17">
    <location>
        <begin position="232"/>
        <end position="239"/>
    </location>
</feature>
<feature type="helix" evidence="17">
    <location>
        <begin position="243"/>
        <end position="245"/>
    </location>
</feature>
<feature type="strand" evidence="17">
    <location>
        <begin position="248"/>
        <end position="251"/>
    </location>
</feature>
<feature type="helix" evidence="17">
    <location>
        <begin position="253"/>
        <end position="267"/>
    </location>
</feature>
<feature type="helix" evidence="16">
    <location>
        <begin position="270"/>
        <end position="272"/>
    </location>
</feature>
<feature type="strand" evidence="17">
    <location>
        <begin position="275"/>
        <end position="278"/>
    </location>
</feature>
<feature type="helix" evidence="17">
    <location>
        <begin position="280"/>
        <end position="282"/>
    </location>
</feature>
<feature type="strand" evidence="17">
    <location>
        <begin position="284"/>
        <end position="287"/>
    </location>
</feature>
<feature type="helix" evidence="17">
    <location>
        <begin position="294"/>
        <end position="296"/>
    </location>
</feature>
<feature type="turn" evidence="17">
    <location>
        <begin position="297"/>
        <end position="300"/>
    </location>
</feature>
<feature type="helix" evidence="17">
    <location>
        <begin position="305"/>
        <end position="318"/>
    </location>
</feature>
<feature type="helix" evidence="17">
    <location>
        <begin position="321"/>
        <end position="337"/>
    </location>
</feature>
<feature type="strand" evidence="13">
    <location>
        <begin position="338"/>
        <end position="340"/>
    </location>
</feature>
<feature type="strand" evidence="17">
    <location>
        <begin position="345"/>
        <end position="347"/>
    </location>
</feature>
<feature type="helix" evidence="17">
    <location>
        <begin position="351"/>
        <end position="363"/>
    </location>
</feature>
<evidence type="ECO:0000250" key="1">
    <source>
        <dbReference type="UniProtKB" id="Q9D6R2"/>
    </source>
</evidence>
<evidence type="ECO:0000269" key="2">
    <source>
    </source>
</evidence>
<evidence type="ECO:0000269" key="3">
    <source>
    </source>
</evidence>
<evidence type="ECO:0000269" key="4">
    <source>
    </source>
</evidence>
<evidence type="ECO:0000269" key="5">
    <source>
    </source>
</evidence>
<evidence type="ECO:0000269" key="6">
    <source>
    </source>
</evidence>
<evidence type="ECO:0000303" key="7">
    <source>
    </source>
</evidence>
<evidence type="ECO:0000305" key="8"/>
<evidence type="ECO:0000305" key="9">
    <source>
    </source>
</evidence>
<evidence type="ECO:0000312" key="10">
    <source>
        <dbReference type="HGNC" id="HGNC:5384"/>
    </source>
</evidence>
<evidence type="ECO:0007744" key="11">
    <source>
    </source>
</evidence>
<evidence type="ECO:0007744" key="12">
    <source>
    </source>
</evidence>
<evidence type="ECO:0007829" key="13">
    <source>
        <dbReference type="PDB" id="5GRF"/>
    </source>
</evidence>
<evidence type="ECO:0007829" key="14">
    <source>
        <dbReference type="PDB" id="5GRI"/>
    </source>
</evidence>
<evidence type="ECO:0007829" key="15">
    <source>
        <dbReference type="PDB" id="6KE3"/>
    </source>
</evidence>
<evidence type="ECO:0007829" key="16">
    <source>
        <dbReference type="PDB" id="6L57"/>
    </source>
</evidence>
<evidence type="ECO:0007829" key="17">
    <source>
        <dbReference type="PDB" id="6L59"/>
    </source>
</evidence>
<evidence type="ECO:0007829" key="18">
    <source>
        <dbReference type="PDB" id="8GRG"/>
    </source>
</evidence>
<evidence type="ECO:0007829" key="19">
    <source>
        <dbReference type="PDB" id="8GRU"/>
    </source>
</evidence>
<protein>
    <recommendedName>
        <fullName evidence="9">Isocitrate dehydrogenase [NAD] subunit alpha, mitochondrial</fullName>
        <ecNumber evidence="2 3">1.1.1.41</ecNumber>
    </recommendedName>
    <alternativeName>
        <fullName>Isocitric dehydrogenase subunit alpha</fullName>
    </alternativeName>
    <alternativeName>
        <fullName>NAD(+)-specific ICDH subunit alpha</fullName>
    </alternativeName>
</protein>
<proteinExistence type="evidence at protein level"/>
<reference key="1">
    <citation type="journal article" date="1995" name="Biochem. J.">
        <title>Characterization of a cDNA clone for human NAD(+)-specific isocitrate dehydrogenase alpha-subunit and structural comparison with its isoenzymes from different species.</title>
        <authorList>
            <person name="Kim Y.O."/>
            <person name="Oh I.U."/>
            <person name="Park H.S."/>
            <person name="Jeng J."/>
            <person name="Song B.J."/>
            <person name="Huh T.L."/>
        </authorList>
    </citation>
    <scope>NUCLEOTIDE SEQUENCE [MRNA] (ISOFORM 1)</scope>
    <scope>FUNCTION</scope>
    <scope>CATALYTIC ACTIVITY</scope>
    <source>
        <tissue>Heart</tissue>
    </source>
</reference>
<reference key="2">
    <citation type="journal article" date="2007" name="BMC Genomics">
        <title>The full-ORF clone resource of the German cDNA consortium.</title>
        <authorList>
            <person name="Bechtel S."/>
            <person name="Rosenfelder H."/>
            <person name="Duda A."/>
            <person name="Schmidt C.P."/>
            <person name="Ernst U."/>
            <person name="Wellenreuther R."/>
            <person name="Mehrle A."/>
            <person name="Schuster C."/>
            <person name="Bahr A."/>
            <person name="Bloecker H."/>
            <person name="Heubner D."/>
            <person name="Hoerlein A."/>
            <person name="Michel G."/>
            <person name="Wedler H."/>
            <person name="Koehrer K."/>
            <person name="Ottenwaelder B."/>
            <person name="Poustka A."/>
            <person name="Wiemann S."/>
            <person name="Schupp I."/>
        </authorList>
    </citation>
    <scope>NUCLEOTIDE SEQUENCE [LARGE SCALE MRNA] (ISOFORM 2)</scope>
    <source>
        <tissue>Brain cortex</tissue>
    </source>
</reference>
<reference key="3">
    <citation type="submission" date="2005-09" db="EMBL/GenBank/DDBJ databases">
        <authorList>
            <person name="Mural R.J."/>
            <person name="Istrail S."/>
            <person name="Sutton G.G."/>
            <person name="Florea L."/>
            <person name="Halpern A.L."/>
            <person name="Mobarry C.M."/>
            <person name="Lippert R."/>
            <person name="Walenz B."/>
            <person name="Shatkay H."/>
            <person name="Dew I."/>
            <person name="Miller J.R."/>
            <person name="Flanigan M.J."/>
            <person name="Edwards N.J."/>
            <person name="Bolanos R."/>
            <person name="Fasulo D."/>
            <person name="Halldorsson B.V."/>
            <person name="Hannenhalli S."/>
            <person name="Turner R."/>
            <person name="Yooseph S."/>
            <person name="Lu F."/>
            <person name="Nusskern D.R."/>
            <person name="Shue B.C."/>
            <person name="Zheng X.H."/>
            <person name="Zhong F."/>
            <person name="Delcher A.L."/>
            <person name="Huson D.H."/>
            <person name="Kravitz S.A."/>
            <person name="Mouchard L."/>
            <person name="Reinert K."/>
            <person name="Remington K.A."/>
            <person name="Clark A.G."/>
            <person name="Waterman M.S."/>
            <person name="Eichler E.E."/>
            <person name="Adams M.D."/>
            <person name="Hunkapiller M.W."/>
            <person name="Myers E.W."/>
            <person name="Venter J.C."/>
        </authorList>
    </citation>
    <scope>NUCLEOTIDE SEQUENCE [LARGE SCALE GENOMIC DNA]</scope>
</reference>
<reference key="4">
    <citation type="journal article" date="2004" name="Genome Res.">
        <title>The status, quality, and expansion of the NIH full-length cDNA project: the Mammalian Gene Collection (MGC).</title>
        <authorList>
            <consortium name="The MGC Project Team"/>
        </authorList>
    </citation>
    <scope>NUCLEOTIDE SEQUENCE [LARGE SCALE MRNA] (ISOFORM 1)</scope>
    <source>
        <tissue>Lymph</tissue>
    </source>
</reference>
<reference key="5">
    <citation type="submission" date="2008-12" db="UniProtKB">
        <authorList>
            <person name="Lubec G."/>
            <person name="Vishwanath V."/>
            <person name="Chen W.-Q."/>
            <person name="Sun Y."/>
        </authorList>
    </citation>
    <scope>PROTEIN SEQUENCE OF 135-146; 179-188 AND 300-316</scope>
    <scope>IDENTIFICATION BY MASS SPECTROMETRY</scope>
    <source>
        <tissue>Brain</tissue>
        <tissue>Cajal-Retzius cell</tissue>
        <tissue>Fetal brain cortex</tissue>
    </source>
</reference>
<reference key="6">
    <citation type="journal article" date="2009" name="Science">
        <title>Lysine acetylation targets protein complexes and co-regulates major cellular functions.</title>
        <authorList>
            <person name="Choudhary C."/>
            <person name="Kumar C."/>
            <person name="Gnad F."/>
            <person name="Nielsen M.L."/>
            <person name="Rehman M."/>
            <person name="Walther T.C."/>
            <person name="Olsen J.V."/>
            <person name="Mann M."/>
        </authorList>
    </citation>
    <scope>ACETYLATION [LARGE SCALE ANALYSIS] AT LYS-343</scope>
    <scope>IDENTIFICATION BY MASS SPECTROMETRY [LARGE SCALE ANALYSIS]</scope>
</reference>
<reference key="7">
    <citation type="journal article" date="2011" name="BMC Syst. Biol.">
        <title>Initial characterization of the human central proteome.</title>
        <authorList>
            <person name="Burkard T.R."/>
            <person name="Planyavsky M."/>
            <person name="Kaupe I."/>
            <person name="Breitwieser F.P."/>
            <person name="Buerckstuemmer T."/>
            <person name="Bennett K.L."/>
            <person name="Superti-Furga G."/>
            <person name="Colinge J."/>
        </authorList>
    </citation>
    <scope>IDENTIFICATION BY MASS SPECTROMETRY [LARGE SCALE ANALYSIS]</scope>
</reference>
<reference key="8">
    <citation type="journal article" date="2015" name="Proteomics">
        <title>N-terminome analysis of the human mitochondrial proteome.</title>
        <authorList>
            <person name="Vaca Jacome A.S."/>
            <person name="Rabilloud T."/>
            <person name="Schaeffer-Reiss C."/>
            <person name="Rompais M."/>
            <person name="Ayoub D."/>
            <person name="Lane L."/>
            <person name="Bairoch A."/>
            <person name="Van Dorsselaer A."/>
            <person name="Carapito C."/>
        </authorList>
    </citation>
    <scope>CLEAVAGE OF TRANSIT PEPTIDE [LARGE SCALE ANALYSIS] AFTER PHE-27</scope>
    <scope>IDENTIFICATION BY MASS SPECTROMETRY [LARGE SCALE ANALYSIS]</scope>
</reference>
<reference key="9">
    <citation type="journal article" date="2017" name="Sci. Rep.">
        <title>The beta and gamma subunits play distinct functional roles in the alpha2betagamma heterotetramer of human NAD-dependent isocitrate dehydrogenase.</title>
        <authorList>
            <person name="Ma T."/>
            <person name="Peng Y."/>
            <person name="Huang W."/>
            <person name="Liu Y."/>
            <person name="Ding J."/>
        </authorList>
    </citation>
    <scope>FUNCTION</scope>
    <scope>SUBUNIT</scope>
    <scope>ACTIVITY REGULATION</scope>
    <scope>BIOPHYSICOCHEMICAL PROPERTIES</scope>
    <scope>COFACTOR</scope>
    <scope>CATALYTIC ACTIVITY</scope>
    <scope>MUTAGENESIS OF TYR-153</scope>
</reference>
<reference key="10">
    <citation type="journal article" date="2017" name="Sci. Rep.">
        <title>Molecular mechanism of the allosteric regulation of the alphagamma heterodimer of human NAD-dependent isocitrate dehydrogenase.</title>
        <authorList>
            <person name="Ma T."/>
            <person name="Peng Y."/>
            <person name="Huang W."/>
            <person name="Ding J."/>
        </authorList>
    </citation>
    <scope>X-RAY CRYSTALLOGRAPHY (2.31 ANGSTROMS) OF 28-366 IN COMPLEX WITH MAGNESIUM AND CITRATE</scope>
    <scope>SUBUNIT</scope>
    <scope>CATALYTIC ACTIVITY</scope>
    <scope>COFACTOR</scope>
    <scope>ACTIVITY REGULATION</scope>
    <scope>MUTAGENESIS OF GLU-152; TYR-153; LYS-169; LYS-200; ASN-202; ASP-208 AND TYR-255</scope>
</reference>
<reference key="11">
    <citation type="journal article" date="2017" name="Ophthalmology">
        <title>Whole-exome sequencing identifies biallelic IDH3A variants as a cause of retinitis pigmentosa accompanied by pseudocoloboma.</title>
        <authorList>
            <person name="Pierrache L.H.M."/>
            <person name="Kimchi A."/>
            <person name="Ratnapriya R."/>
            <person name="Roberts L."/>
            <person name="Astuti G.D.N."/>
            <person name="Obolensky A."/>
            <person name="Beryozkin A."/>
            <person name="Tjon-Fo-Sang M.J.H."/>
            <person name="Schuil J."/>
            <person name="Klaver C.C.W."/>
            <person name="Bongers E.M.H.F."/>
            <person name="Haer-Wigman L."/>
            <person name="Schalij N."/>
            <person name="Breuning M.H."/>
            <person name="Fischer G.M."/>
            <person name="Banin E."/>
            <person name="Ramesar R.S."/>
            <person name="Swaroop A."/>
            <person name="van den Born L.I."/>
            <person name="Sharon D."/>
            <person name="Cremers F.P.M."/>
        </authorList>
    </citation>
    <scope>VARIANTS RP90 155-GLY--ASP-366 DEL; VAL-175; THR-239; HIS-304; THR-313 AND CYS-316</scope>
    <scope>INVOLVEMENT IN RP90</scope>
</reference>
<reference key="12">
    <citation type="journal article" date="2018" name="Ophthalmic Genet.">
        <title>A novel variant in IDH3A identified in a case with Leber congenital amaurosis accompanied by macular pseudocoloboma.</title>
        <authorList>
            <person name="Sun W."/>
            <person name="Zhang Q."/>
        </authorList>
    </citation>
    <scope>VARIANT RP90 ILE-204</scope>
    <scope>INVOLVEMENT IN RP90</scope>
</reference>
<reference key="13">
    <citation type="journal article" date="2019" name="Ophthalmic Genet.">
        <title>A novel missense variant in IDH3A causes autosomal recessive retinitis pigmentosa.</title>
        <authorList>
            <person name="Peter V.G."/>
            <person name="Nikopoulos K."/>
            <person name="Quinodoz M."/>
            <person name="Granse L."/>
            <person name="Farinelli P."/>
            <person name="Superti-Furga A."/>
            <person name="Andreasson S."/>
            <person name="Rivolta C."/>
        </authorList>
    </citation>
    <scope>VARIANT RP90 THR-122</scope>
    <scope>INVOLVEMENT IN RP90</scope>
</reference>